<dbReference type="EMBL" id="AL935263">
    <property type="protein sequence ID" value="CCC78446.1"/>
    <property type="molecule type" value="Genomic_DNA"/>
</dbReference>
<dbReference type="RefSeq" id="WP_003641254.1">
    <property type="nucleotide sequence ID" value="NC_004567.2"/>
</dbReference>
<dbReference type="RefSeq" id="YP_004888960.1">
    <property type="nucleotide sequence ID" value="NC_004567.2"/>
</dbReference>
<dbReference type="SMR" id="Q88XY4"/>
<dbReference type="STRING" id="220668.lp_1035"/>
<dbReference type="EnsemblBacteria" id="CCC78446">
    <property type="protein sequence ID" value="CCC78446"/>
    <property type="gene ID" value="lp_1035"/>
</dbReference>
<dbReference type="GeneID" id="79806687"/>
<dbReference type="KEGG" id="lpl:lp_1035"/>
<dbReference type="PATRIC" id="fig|220668.9.peg.873"/>
<dbReference type="eggNOG" id="COG0089">
    <property type="taxonomic scope" value="Bacteria"/>
</dbReference>
<dbReference type="HOGENOM" id="CLU_037562_3_2_9"/>
<dbReference type="OrthoDB" id="9793353at2"/>
<dbReference type="PhylomeDB" id="Q88XY4"/>
<dbReference type="Proteomes" id="UP000000432">
    <property type="component" value="Chromosome"/>
</dbReference>
<dbReference type="GO" id="GO:1990904">
    <property type="term" value="C:ribonucleoprotein complex"/>
    <property type="evidence" value="ECO:0007669"/>
    <property type="project" value="UniProtKB-KW"/>
</dbReference>
<dbReference type="GO" id="GO:0005840">
    <property type="term" value="C:ribosome"/>
    <property type="evidence" value="ECO:0007669"/>
    <property type="project" value="UniProtKB-KW"/>
</dbReference>
<dbReference type="GO" id="GO:0019843">
    <property type="term" value="F:rRNA binding"/>
    <property type="evidence" value="ECO:0007669"/>
    <property type="project" value="UniProtKB-UniRule"/>
</dbReference>
<dbReference type="GO" id="GO:0003735">
    <property type="term" value="F:structural constituent of ribosome"/>
    <property type="evidence" value="ECO:0007669"/>
    <property type="project" value="InterPro"/>
</dbReference>
<dbReference type="GO" id="GO:0006412">
    <property type="term" value="P:translation"/>
    <property type="evidence" value="ECO:0007669"/>
    <property type="project" value="UniProtKB-UniRule"/>
</dbReference>
<dbReference type="FunFam" id="3.30.70.330:FF:000001">
    <property type="entry name" value="50S ribosomal protein L23"/>
    <property type="match status" value="1"/>
</dbReference>
<dbReference type="Gene3D" id="3.30.70.330">
    <property type="match status" value="1"/>
</dbReference>
<dbReference type="HAMAP" id="MF_01369_B">
    <property type="entry name" value="Ribosomal_uL23_B"/>
    <property type="match status" value="1"/>
</dbReference>
<dbReference type="InterPro" id="IPR012677">
    <property type="entry name" value="Nucleotide-bd_a/b_plait_sf"/>
</dbReference>
<dbReference type="InterPro" id="IPR013025">
    <property type="entry name" value="Ribosomal_uL23-like"/>
</dbReference>
<dbReference type="InterPro" id="IPR012678">
    <property type="entry name" value="Ribosomal_uL23/eL15/eS24_sf"/>
</dbReference>
<dbReference type="InterPro" id="IPR001014">
    <property type="entry name" value="Ribosomal_uL23_CS"/>
</dbReference>
<dbReference type="NCBIfam" id="NF004363">
    <property type="entry name" value="PRK05738.2-4"/>
    <property type="match status" value="1"/>
</dbReference>
<dbReference type="PANTHER" id="PTHR11620">
    <property type="entry name" value="60S RIBOSOMAL PROTEIN L23A"/>
    <property type="match status" value="1"/>
</dbReference>
<dbReference type="Pfam" id="PF00276">
    <property type="entry name" value="Ribosomal_L23"/>
    <property type="match status" value="1"/>
</dbReference>
<dbReference type="SUPFAM" id="SSF54189">
    <property type="entry name" value="Ribosomal proteins S24e, L23 and L15e"/>
    <property type="match status" value="1"/>
</dbReference>
<dbReference type="PROSITE" id="PS00050">
    <property type="entry name" value="RIBOSOMAL_L23"/>
    <property type="match status" value="1"/>
</dbReference>
<organism>
    <name type="scientific">Lactiplantibacillus plantarum (strain ATCC BAA-793 / NCIMB 8826 / WCFS1)</name>
    <name type="common">Lactobacillus plantarum</name>
    <dbReference type="NCBI Taxonomy" id="220668"/>
    <lineage>
        <taxon>Bacteria</taxon>
        <taxon>Bacillati</taxon>
        <taxon>Bacillota</taxon>
        <taxon>Bacilli</taxon>
        <taxon>Lactobacillales</taxon>
        <taxon>Lactobacillaceae</taxon>
        <taxon>Lactiplantibacillus</taxon>
    </lineage>
</organism>
<comment type="function">
    <text evidence="1">One of the early assembly proteins it binds 23S rRNA. One of the proteins that surrounds the polypeptide exit tunnel on the outside of the ribosome. Forms the main docking site for trigger factor binding to the ribosome.</text>
</comment>
<comment type="subunit">
    <text evidence="1">Part of the 50S ribosomal subunit. Contacts protein L29, and trigger factor when it is bound to the ribosome.</text>
</comment>
<comment type="similarity">
    <text evidence="1">Belongs to the universal ribosomal protein uL23 family.</text>
</comment>
<proteinExistence type="inferred from homology"/>
<sequence>MEARDVILRPVVTESSMADLDDKRYTFDVNVQATKTQVKKAIEEIFDVKVVKVNVMNVKGKLKRQGRYAGYTKKRRKAIVTLSSDSNEIKLFNDDQQ</sequence>
<keyword id="KW-1185">Reference proteome</keyword>
<keyword id="KW-0687">Ribonucleoprotein</keyword>
<keyword id="KW-0689">Ribosomal protein</keyword>
<keyword id="KW-0694">RNA-binding</keyword>
<keyword id="KW-0699">rRNA-binding</keyword>
<protein>
    <recommendedName>
        <fullName evidence="1">Large ribosomal subunit protein uL23</fullName>
    </recommendedName>
    <alternativeName>
        <fullName evidence="2">50S ribosomal protein L23</fullName>
    </alternativeName>
</protein>
<accession>Q88XY4</accession>
<accession>F9UMK7</accession>
<name>RL23_LACPL</name>
<reference key="1">
    <citation type="journal article" date="2003" name="Proc. Natl. Acad. Sci. U.S.A.">
        <title>Complete genome sequence of Lactobacillus plantarum WCFS1.</title>
        <authorList>
            <person name="Kleerebezem M."/>
            <person name="Boekhorst J."/>
            <person name="van Kranenburg R."/>
            <person name="Molenaar D."/>
            <person name="Kuipers O.P."/>
            <person name="Leer R."/>
            <person name="Tarchini R."/>
            <person name="Peters S.A."/>
            <person name="Sandbrink H.M."/>
            <person name="Fiers M.W.E.J."/>
            <person name="Stiekema W."/>
            <person name="Klein Lankhorst R.M."/>
            <person name="Bron P.A."/>
            <person name="Hoffer S.M."/>
            <person name="Nierop Groot M.N."/>
            <person name="Kerkhoven R."/>
            <person name="De Vries M."/>
            <person name="Ursing B."/>
            <person name="De Vos W.M."/>
            <person name="Siezen R.J."/>
        </authorList>
    </citation>
    <scope>NUCLEOTIDE SEQUENCE [LARGE SCALE GENOMIC DNA]</scope>
    <source>
        <strain>ATCC BAA-793 / NCIMB 8826 / WCFS1</strain>
    </source>
</reference>
<reference key="2">
    <citation type="journal article" date="2012" name="J. Bacteriol.">
        <title>Complete resequencing and reannotation of the Lactobacillus plantarum WCFS1 genome.</title>
        <authorList>
            <person name="Siezen R.J."/>
            <person name="Francke C."/>
            <person name="Renckens B."/>
            <person name="Boekhorst J."/>
            <person name="Wels M."/>
            <person name="Kleerebezem M."/>
            <person name="van Hijum S.A."/>
        </authorList>
    </citation>
    <scope>NUCLEOTIDE SEQUENCE [LARGE SCALE GENOMIC DNA]</scope>
    <scope>GENOME REANNOTATION</scope>
    <source>
        <strain>ATCC BAA-793 / NCIMB 8826 / WCFS1</strain>
    </source>
</reference>
<feature type="chain" id="PRO_1000068094" description="Large ribosomal subunit protein uL23">
    <location>
        <begin position="1"/>
        <end position="97"/>
    </location>
</feature>
<evidence type="ECO:0000255" key="1">
    <source>
        <dbReference type="HAMAP-Rule" id="MF_01369"/>
    </source>
</evidence>
<evidence type="ECO:0000305" key="2"/>
<gene>
    <name evidence="1" type="primary">rplW</name>
    <name type="ordered locus">lp_1035</name>
</gene>